<protein>
    <recommendedName>
        <fullName evidence="1">Crossover junction endodeoxyribonuclease RuvC</fullName>
        <ecNumber evidence="1">3.1.21.10</ecNumber>
    </recommendedName>
    <alternativeName>
        <fullName evidence="1">Holliday junction nuclease RuvC</fullName>
    </alternativeName>
    <alternativeName>
        <fullName evidence="1">Holliday junction resolvase RuvC</fullName>
    </alternativeName>
</protein>
<proteinExistence type="inferred from homology"/>
<gene>
    <name evidence="1" type="primary">ruvC</name>
    <name type="ordered locus">GbCGDNIH1_1098</name>
</gene>
<feature type="chain" id="PRO_0000332422" description="Crossover junction endodeoxyribonuclease RuvC">
    <location>
        <begin position="1"/>
        <end position="178"/>
    </location>
</feature>
<feature type="active site" evidence="1">
    <location>
        <position position="18"/>
    </location>
</feature>
<feature type="active site" evidence="1">
    <location>
        <position position="78"/>
    </location>
</feature>
<feature type="active site" evidence="1">
    <location>
        <position position="150"/>
    </location>
</feature>
<feature type="binding site" evidence="1">
    <location>
        <position position="18"/>
    </location>
    <ligand>
        <name>Mg(2+)</name>
        <dbReference type="ChEBI" id="CHEBI:18420"/>
        <label>1</label>
    </ligand>
</feature>
<feature type="binding site" evidence="1">
    <location>
        <position position="78"/>
    </location>
    <ligand>
        <name>Mg(2+)</name>
        <dbReference type="ChEBI" id="CHEBI:18420"/>
        <label>2</label>
    </ligand>
</feature>
<feature type="binding site" evidence="1">
    <location>
        <position position="150"/>
    </location>
    <ligand>
        <name>Mg(2+)</name>
        <dbReference type="ChEBI" id="CHEBI:18420"/>
        <label>1</label>
    </ligand>
</feature>
<dbReference type="EC" id="3.1.21.10" evidence="1"/>
<dbReference type="EMBL" id="CP000394">
    <property type="protein sequence ID" value="ABI61996.1"/>
    <property type="molecule type" value="Genomic_DNA"/>
</dbReference>
<dbReference type="RefSeq" id="WP_011631805.1">
    <property type="nucleotide sequence ID" value="NC_008343.2"/>
</dbReference>
<dbReference type="SMR" id="Q0BT56"/>
<dbReference type="STRING" id="391165.GbCGDNIH1_1098"/>
<dbReference type="KEGG" id="gbe:GbCGDNIH1_1098"/>
<dbReference type="eggNOG" id="COG0817">
    <property type="taxonomic scope" value="Bacteria"/>
</dbReference>
<dbReference type="HOGENOM" id="CLU_091257_1_0_5"/>
<dbReference type="OrthoDB" id="9805499at2"/>
<dbReference type="Proteomes" id="UP000001963">
    <property type="component" value="Chromosome"/>
</dbReference>
<dbReference type="GO" id="GO:0005737">
    <property type="term" value="C:cytoplasm"/>
    <property type="evidence" value="ECO:0007669"/>
    <property type="project" value="UniProtKB-SubCell"/>
</dbReference>
<dbReference type="GO" id="GO:0048476">
    <property type="term" value="C:Holliday junction resolvase complex"/>
    <property type="evidence" value="ECO:0007669"/>
    <property type="project" value="UniProtKB-UniRule"/>
</dbReference>
<dbReference type="GO" id="GO:0008821">
    <property type="term" value="F:crossover junction DNA endonuclease activity"/>
    <property type="evidence" value="ECO:0007669"/>
    <property type="project" value="UniProtKB-UniRule"/>
</dbReference>
<dbReference type="GO" id="GO:0003677">
    <property type="term" value="F:DNA binding"/>
    <property type="evidence" value="ECO:0007669"/>
    <property type="project" value="UniProtKB-KW"/>
</dbReference>
<dbReference type="GO" id="GO:0000287">
    <property type="term" value="F:magnesium ion binding"/>
    <property type="evidence" value="ECO:0007669"/>
    <property type="project" value="UniProtKB-UniRule"/>
</dbReference>
<dbReference type="GO" id="GO:0006310">
    <property type="term" value="P:DNA recombination"/>
    <property type="evidence" value="ECO:0007669"/>
    <property type="project" value="UniProtKB-UniRule"/>
</dbReference>
<dbReference type="GO" id="GO:0006281">
    <property type="term" value="P:DNA repair"/>
    <property type="evidence" value="ECO:0007669"/>
    <property type="project" value="UniProtKB-UniRule"/>
</dbReference>
<dbReference type="CDD" id="cd16962">
    <property type="entry name" value="RuvC"/>
    <property type="match status" value="1"/>
</dbReference>
<dbReference type="FunFam" id="3.30.420.10:FF:000002">
    <property type="entry name" value="Crossover junction endodeoxyribonuclease RuvC"/>
    <property type="match status" value="1"/>
</dbReference>
<dbReference type="Gene3D" id="3.30.420.10">
    <property type="entry name" value="Ribonuclease H-like superfamily/Ribonuclease H"/>
    <property type="match status" value="1"/>
</dbReference>
<dbReference type="HAMAP" id="MF_00034">
    <property type="entry name" value="RuvC"/>
    <property type="match status" value="1"/>
</dbReference>
<dbReference type="InterPro" id="IPR012337">
    <property type="entry name" value="RNaseH-like_sf"/>
</dbReference>
<dbReference type="InterPro" id="IPR036397">
    <property type="entry name" value="RNaseH_sf"/>
</dbReference>
<dbReference type="InterPro" id="IPR020563">
    <property type="entry name" value="X-over_junc_endoDNase_Mg_BS"/>
</dbReference>
<dbReference type="InterPro" id="IPR002176">
    <property type="entry name" value="X-over_junc_endoDNase_RuvC"/>
</dbReference>
<dbReference type="NCBIfam" id="TIGR00228">
    <property type="entry name" value="ruvC"/>
    <property type="match status" value="1"/>
</dbReference>
<dbReference type="PANTHER" id="PTHR30194">
    <property type="entry name" value="CROSSOVER JUNCTION ENDODEOXYRIBONUCLEASE RUVC"/>
    <property type="match status" value="1"/>
</dbReference>
<dbReference type="PANTHER" id="PTHR30194:SF3">
    <property type="entry name" value="CROSSOVER JUNCTION ENDODEOXYRIBONUCLEASE RUVC"/>
    <property type="match status" value="1"/>
</dbReference>
<dbReference type="Pfam" id="PF02075">
    <property type="entry name" value="RuvC"/>
    <property type="match status" value="1"/>
</dbReference>
<dbReference type="PRINTS" id="PR00696">
    <property type="entry name" value="RSOLVASERUVC"/>
</dbReference>
<dbReference type="SUPFAM" id="SSF53098">
    <property type="entry name" value="Ribonuclease H-like"/>
    <property type="match status" value="1"/>
</dbReference>
<dbReference type="PROSITE" id="PS01321">
    <property type="entry name" value="RUVC"/>
    <property type="match status" value="1"/>
</dbReference>
<comment type="function">
    <text evidence="1">The RuvA-RuvB-RuvC complex processes Holliday junction (HJ) DNA during genetic recombination and DNA repair. Endonuclease that resolves HJ intermediates. Cleaves cruciform DNA by making single-stranded nicks across the HJ at symmetrical positions within the homologous arms, yielding a 5'-phosphate and a 3'-hydroxyl group; requires a central core of homology in the junction. The consensus cleavage sequence is 5'-(A/T)TT(C/G)-3'. Cleavage occurs on the 3'-side of the TT dinucleotide at the point of strand exchange. HJ branch migration catalyzed by RuvA-RuvB allows RuvC to scan DNA until it finds its consensus sequence, where it cleaves and resolves the cruciform DNA.</text>
</comment>
<comment type="catalytic activity">
    <reaction evidence="1">
        <text>Endonucleolytic cleavage at a junction such as a reciprocal single-stranded crossover between two homologous DNA duplexes (Holliday junction).</text>
        <dbReference type="EC" id="3.1.21.10"/>
    </reaction>
</comment>
<comment type="cofactor">
    <cofactor evidence="1">
        <name>Mg(2+)</name>
        <dbReference type="ChEBI" id="CHEBI:18420"/>
    </cofactor>
    <text evidence="1">Binds 2 Mg(2+) ion per subunit.</text>
</comment>
<comment type="subunit">
    <text evidence="1">Homodimer which binds Holliday junction (HJ) DNA. The HJ becomes 2-fold symmetrical on binding to RuvC with unstacked arms; it has a different conformation from HJ DNA in complex with RuvA. In the full resolvosome a probable DNA-RuvA(4)-RuvB(12)-RuvC(2) complex forms which resolves the HJ.</text>
</comment>
<comment type="subcellular location">
    <subcellularLocation>
        <location evidence="1">Cytoplasm</location>
    </subcellularLocation>
</comment>
<comment type="similarity">
    <text evidence="1">Belongs to the RuvC family.</text>
</comment>
<organism>
    <name type="scientific">Granulibacter bethesdensis (strain ATCC BAA-1260 / CGDNIH1)</name>
    <dbReference type="NCBI Taxonomy" id="391165"/>
    <lineage>
        <taxon>Bacteria</taxon>
        <taxon>Pseudomonadati</taxon>
        <taxon>Pseudomonadota</taxon>
        <taxon>Alphaproteobacteria</taxon>
        <taxon>Acetobacterales</taxon>
        <taxon>Acetobacteraceae</taxon>
        <taxon>Granulibacter</taxon>
    </lineage>
</organism>
<accession>Q0BT56</accession>
<evidence type="ECO:0000255" key="1">
    <source>
        <dbReference type="HAMAP-Rule" id="MF_00034"/>
    </source>
</evidence>
<name>RUVC_GRABC</name>
<keyword id="KW-0963">Cytoplasm</keyword>
<keyword id="KW-0227">DNA damage</keyword>
<keyword id="KW-0233">DNA recombination</keyword>
<keyword id="KW-0234">DNA repair</keyword>
<keyword id="KW-0238">DNA-binding</keyword>
<keyword id="KW-0255">Endonuclease</keyword>
<keyword id="KW-0378">Hydrolase</keyword>
<keyword id="KW-0460">Magnesium</keyword>
<keyword id="KW-0479">Metal-binding</keyword>
<keyword id="KW-0540">Nuclease</keyword>
<keyword id="KW-1185">Reference proteome</keyword>
<sequence>MLSASPPAQATVRMLGIDPGLRFTGWGVIEATGNRLRHIADGVIATDSTESVPARLRVLHDTLTSLLVTYHPDEAAVEETYVNRNGTATLKLGYARGVALLAPALRNVPVAEYGAKAVKLAVVGTGGATKDQVQMMVQRLLPGATLKRADAADALAVAICHAHHRASRSAWARGAVMA</sequence>
<reference key="1">
    <citation type="journal article" date="2007" name="J. Bacteriol.">
        <title>Genome sequence analysis of the emerging human pathogenic acetic acid bacterium Granulibacter bethesdensis.</title>
        <authorList>
            <person name="Greenberg D.E."/>
            <person name="Porcella S.F."/>
            <person name="Zelazny A.M."/>
            <person name="Virtaneva K."/>
            <person name="Sturdevant D.E."/>
            <person name="Kupko J.J. III"/>
            <person name="Barbian K.D."/>
            <person name="Babar A."/>
            <person name="Dorward D.W."/>
            <person name="Holland S.M."/>
        </authorList>
    </citation>
    <scope>NUCLEOTIDE SEQUENCE [LARGE SCALE GENOMIC DNA]</scope>
    <source>
        <strain>ATCC BAA-1260 / CGDNIH1</strain>
    </source>
</reference>